<proteinExistence type="inferred from homology"/>
<evidence type="ECO:0000255" key="1">
    <source>
        <dbReference type="HAMAP-Rule" id="MF_01220"/>
    </source>
</evidence>
<protein>
    <recommendedName>
        <fullName evidence="1">Uridylate kinase</fullName>
        <shortName evidence="1">UK</shortName>
        <ecNumber evidence="1">2.7.4.22</ecNumber>
    </recommendedName>
    <alternativeName>
        <fullName evidence="1">Uridine monophosphate kinase</fullName>
        <shortName evidence="1">UMP kinase</shortName>
        <shortName evidence="1">UMPK</shortName>
    </alternativeName>
</protein>
<sequence>MPNAYKRVLLKLSGEALMGDDAFGINRATIERMVADIAEVVRLGTQLAVVIGGGNIFRGVAGGAAGMDRATADYMGMLATMMNALALQDAMRHAGIEARVQSALRMDQVVEPYIRPRAIRQLEEGKVVIFAAGTGNPFFTTDTAAALRGSEVGAEVVLKATKVDGVYSADPKKDPSATRYSSISFDEAIGRNLQVMDATAFALCRDQKLPIRVFSINKPGALKRIVQGEDEGTLVHV</sequence>
<dbReference type="EC" id="2.7.4.22" evidence="1"/>
<dbReference type="EMBL" id="CP000010">
    <property type="protein sequence ID" value="AAU47753.1"/>
    <property type="molecule type" value="Genomic_DNA"/>
</dbReference>
<dbReference type="RefSeq" id="WP_004193606.1">
    <property type="nucleotide sequence ID" value="NC_006348.1"/>
</dbReference>
<dbReference type="RefSeq" id="YP_103193.1">
    <property type="nucleotide sequence ID" value="NC_006348.1"/>
</dbReference>
<dbReference type="SMR" id="Q62JC6"/>
<dbReference type="GeneID" id="93060698"/>
<dbReference type="KEGG" id="bma:BMA1553"/>
<dbReference type="PATRIC" id="fig|243160.12.peg.1598"/>
<dbReference type="eggNOG" id="COG0528">
    <property type="taxonomic scope" value="Bacteria"/>
</dbReference>
<dbReference type="HOGENOM" id="CLU_033861_0_0_4"/>
<dbReference type="UniPathway" id="UPA00159">
    <property type="reaction ID" value="UER00275"/>
</dbReference>
<dbReference type="Proteomes" id="UP000006693">
    <property type="component" value="Chromosome 1"/>
</dbReference>
<dbReference type="GO" id="GO:0005829">
    <property type="term" value="C:cytosol"/>
    <property type="evidence" value="ECO:0007669"/>
    <property type="project" value="TreeGrafter"/>
</dbReference>
<dbReference type="GO" id="GO:0005524">
    <property type="term" value="F:ATP binding"/>
    <property type="evidence" value="ECO:0007669"/>
    <property type="project" value="UniProtKB-KW"/>
</dbReference>
<dbReference type="GO" id="GO:0033862">
    <property type="term" value="F:UMP kinase activity"/>
    <property type="evidence" value="ECO:0007669"/>
    <property type="project" value="UniProtKB-EC"/>
</dbReference>
<dbReference type="GO" id="GO:0044210">
    <property type="term" value="P:'de novo' CTP biosynthetic process"/>
    <property type="evidence" value="ECO:0007669"/>
    <property type="project" value="UniProtKB-UniRule"/>
</dbReference>
<dbReference type="GO" id="GO:0006225">
    <property type="term" value="P:UDP biosynthetic process"/>
    <property type="evidence" value="ECO:0007669"/>
    <property type="project" value="TreeGrafter"/>
</dbReference>
<dbReference type="CDD" id="cd04254">
    <property type="entry name" value="AAK_UMPK-PyrH-Ec"/>
    <property type="match status" value="1"/>
</dbReference>
<dbReference type="FunFam" id="3.40.1160.10:FF:000001">
    <property type="entry name" value="Uridylate kinase"/>
    <property type="match status" value="1"/>
</dbReference>
<dbReference type="Gene3D" id="3.40.1160.10">
    <property type="entry name" value="Acetylglutamate kinase-like"/>
    <property type="match status" value="1"/>
</dbReference>
<dbReference type="HAMAP" id="MF_01220_B">
    <property type="entry name" value="PyrH_B"/>
    <property type="match status" value="1"/>
</dbReference>
<dbReference type="InterPro" id="IPR036393">
    <property type="entry name" value="AceGlu_kinase-like_sf"/>
</dbReference>
<dbReference type="InterPro" id="IPR001048">
    <property type="entry name" value="Asp/Glu/Uridylate_kinase"/>
</dbReference>
<dbReference type="InterPro" id="IPR011817">
    <property type="entry name" value="Uridylate_kinase"/>
</dbReference>
<dbReference type="InterPro" id="IPR015963">
    <property type="entry name" value="Uridylate_kinase_bac"/>
</dbReference>
<dbReference type="NCBIfam" id="TIGR02075">
    <property type="entry name" value="pyrH_bact"/>
    <property type="match status" value="1"/>
</dbReference>
<dbReference type="PANTHER" id="PTHR42833">
    <property type="entry name" value="URIDYLATE KINASE"/>
    <property type="match status" value="1"/>
</dbReference>
<dbReference type="PANTHER" id="PTHR42833:SF4">
    <property type="entry name" value="URIDYLATE KINASE PUMPKIN, CHLOROPLASTIC"/>
    <property type="match status" value="1"/>
</dbReference>
<dbReference type="Pfam" id="PF00696">
    <property type="entry name" value="AA_kinase"/>
    <property type="match status" value="1"/>
</dbReference>
<dbReference type="PIRSF" id="PIRSF005650">
    <property type="entry name" value="Uridylate_kin"/>
    <property type="match status" value="1"/>
</dbReference>
<dbReference type="SUPFAM" id="SSF53633">
    <property type="entry name" value="Carbamate kinase-like"/>
    <property type="match status" value="1"/>
</dbReference>
<reference key="1">
    <citation type="journal article" date="2004" name="Proc. Natl. Acad. Sci. U.S.A.">
        <title>Structural flexibility in the Burkholderia mallei genome.</title>
        <authorList>
            <person name="Nierman W.C."/>
            <person name="DeShazer D."/>
            <person name="Kim H.S."/>
            <person name="Tettelin H."/>
            <person name="Nelson K.E."/>
            <person name="Feldblyum T.V."/>
            <person name="Ulrich R.L."/>
            <person name="Ronning C.M."/>
            <person name="Brinkac L.M."/>
            <person name="Daugherty S.C."/>
            <person name="Davidsen T.D."/>
            <person name="DeBoy R.T."/>
            <person name="Dimitrov G."/>
            <person name="Dodson R.J."/>
            <person name="Durkin A.S."/>
            <person name="Gwinn M.L."/>
            <person name="Haft D.H."/>
            <person name="Khouri H.M."/>
            <person name="Kolonay J.F."/>
            <person name="Madupu R."/>
            <person name="Mohammoud Y."/>
            <person name="Nelson W.C."/>
            <person name="Radune D."/>
            <person name="Romero C.M."/>
            <person name="Sarria S."/>
            <person name="Selengut J."/>
            <person name="Shamblin C."/>
            <person name="Sullivan S.A."/>
            <person name="White O."/>
            <person name="Yu Y."/>
            <person name="Zafar N."/>
            <person name="Zhou L."/>
            <person name="Fraser C.M."/>
        </authorList>
    </citation>
    <scope>NUCLEOTIDE SEQUENCE [LARGE SCALE GENOMIC DNA]</scope>
    <source>
        <strain>ATCC 23344</strain>
    </source>
</reference>
<keyword id="KW-0067">ATP-binding</keyword>
<keyword id="KW-0963">Cytoplasm</keyword>
<keyword id="KW-0418">Kinase</keyword>
<keyword id="KW-0547">Nucleotide-binding</keyword>
<keyword id="KW-0665">Pyrimidine biosynthesis</keyword>
<keyword id="KW-1185">Reference proteome</keyword>
<keyword id="KW-0808">Transferase</keyword>
<gene>
    <name evidence="1" type="primary">pyrH</name>
    <name type="ordered locus">BMA1553</name>
</gene>
<comment type="function">
    <text evidence="1">Catalyzes the reversible phosphorylation of UMP to UDP.</text>
</comment>
<comment type="catalytic activity">
    <reaction evidence="1">
        <text>UMP + ATP = UDP + ADP</text>
        <dbReference type="Rhea" id="RHEA:24400"/>
        <dbReference type="ChEBI" id="CHEBI:30616"/>
        <dbReference type="ChEBI" id="CHEBI:57865"/>
        <dbReference type="ChEBI" id="CHEBI:58223"/>
        <dbReference type="ChEBI" id="CHEBI:456216"/>
        <dbReference type="EC" id="2.7.4.22"/>
    </reaction>
</comment>
<comment type="activity regulation">
    <text evidence="1">Inhibited by UTP.</text>
</comment>
<comment type="pathway">
    <text evidence="1">Pyrimidine metabolism; CTP biosynthesis via de novo pathway; UDP from UMP (UMPK route): step 1/1.</text>
</comment>
<comment type="subunit">
    <text evidence="1">Homohexamer.</text>
</comment>
<comment type="subcellular location">
    <subcellularLocation>
        <location evidence="1">Cytoplasm</location>
    </subcellularLocation>
</comment>
<comment type="similarity">
    <text evidence="1">Belongs to the UMP kinase family.</text>
</comment>
<name>PYRH_BURMA</name>
<organism>
    <name type="scientific">Burkholderia mallei (strain ATCC 23344)</name>
    <dbReference type="NCBI Taxonomy" id="243160"/>
    <lineage>
        <taxon>Bacteria</taxon>
        <taxon>Pseudomonadati</taxon>
        <taxon>Pseudomonadota</taxon>
        <taxon>Betaproteobacteria</taxon>
        <taxon>Burkholderiales</taxon>
        <taxon>Burkholderiaceae</taxon>
        <taxon>Burkholderia</taxon>
        <taxon>pseudomallei group</taxon>
    </lineage>
</organism>
<feature type="chain" id="PRO_0000323808" description="Uridylate kinase">
    <location>
        <begin position="1"/>
        <end position="237"/>
    </location>
</feature>
<feature type="binding site" evidence="1">
    <location>
        <begin position="11"/>
        <end position="14"/>
    </location>
    <ligand>
        <name>ATP</name>
        <dbReference type="ChEBI" id="CHEBI:30616"/>
    </ligand>
</feature>
<feature type="binding site" evidence="1">
    <location>
        <position position="53"/>
    </location>
    <ligand>
        <name>UMP</name>
        <dbReference type="ChEBI" id="CHEBI:57865"/>
    </ligand>
</feature>
<feature type="binding site" evidence="1">
    <location>
        <position position="54"/>
    </location>
    <ligand>
        <name>ATP</name>
        <dbReference type="ChEBI" id="CHEBI:30616"/>
    </ligand>
</feature>
<feature type="binding site" evidence="1">
    <location>
        <position position="58"/>
    </location>
    <ligand>
        <name>ATP</name>
        <dbReference type="ChEBI" id="CHEBI:30616"/>
    </ligand>
</feature>
<feature type="binding site" evidence="1">
    <location>
        <position position="73"/>
    </location>
    <ligand>
        <name>UMP</name>
        <dbReference type="ChEBI" id="CHEBI:57865"/>
    </ligand>
</feature>
<feature type="binding site" evidence="1">
    <location>
        <begin position="134"/>
        <end position="141"/>
    </location>
    <ligand>
        <name>UMP</name>
        <dbReference type="ChEBI" id="CHEBI:57865"/>
    </ligand>
</feature>
<feature type="binding site" evidence="1">
    <location>
        <position position="161"/>
    </location>
    <ligand>
        <name>ATP</name>
        <dbReference type="ChEBI" id="CHEBI:30616"/>
    </ligand>
</feature>
<feature type="binding site" evidence="1">
    <location>
        <position position="167"/>
    </location>
    <ligand>
        <name>ATP</name>
        <dbReference type="ChEBI" id="CHEBI:30616"/>
    </ligand>
</feature>
<feature type="binding site" evidence="1">
    <location>
        <position position="170"/>
    </location>
    <ligand>
        <name>ATP</name>
        <dbReference type="ChEBI" id="CHEBI:30616"/>
    </ligand>
</feature>
<accession>Q62JC6</accession>